<keyword id="KW-0963">Cytoplasm</keyword>
<keyword id="KW-0488">Methylation</keyword>
<keyword id="KW-0648">Protein biosynthesis</keyword>
<accession>A1TD66</accession>
<proteinExistence type="inferred from homology"/>
<comment type="function">
    <text evidence="1">Peptide chain release factor 1 directs the termination of translation in response to the peptide chain termination codons UAG and UAA.</text>
</comment>
<comment type="subcellular location">
    <subcellularLocation>
        <location evidence="1">Cytoplasm</location>
    </subcellularLocation>
</comment>
<comment type="PTM">
    <text evidence="1">Methylated by PrmC. Methylation increases the termination efficiency of RF1.</text>
</comment>
<comment type="similarity">
    <text evidence="1">Belongs to the prokaryotic/mitochondrial release factor family.</text>
</comment>
<protein>
    <recommendedName>
        <fullName evidence="1">Peptide chain release factor 1</fullName>
        <shortName evidence="1">RF-1</shortName>
    </recommendedName>
</protein>
<feature type="chain" id="PRO_1000004919" description="Peptide chain release factor 1">
    <location>
        <begin position="1"/>
        <end position="357"/>
    </location>
</feature>
<feature type="modified residue" description="N5-methylglutamine" evidence="1">
    <location>
        <position position="236"/>
    </location>
</feature>
<evidence type="ECO:0000255" key="1">
    <source>
        <dbReference type="HAMAP-Rule" id="MF_00093"/>
    </source>
</evidence>
<gene>
    <name evidence="1" type="primary">prfA</name>
    <name type="ordered locus">Mvan_4339</name>
</gene>
<sequence>MTETAPAIEAILAEYGELEQRLADPELHADPAAAKKVGRRFAQISPIVSTYHKLEAARGDLEAARELAADDASFAAEVDELTTKVADLDDRLTDLLAPRDPHDADDIVLEVKSGEGGEESALFAADLARMYIRYAERHGWTVTMLGETTSDLGGYKDATLSIAGKGDSADGVWSRLKFEGGVHRVQRVPVTESQGRVHTSAAGVLVYPEPDEVEQVQIDESDLRIDVYRSSGKGGQGVNTTDSAVRITHLPTGIVVTCQNERSQLQNKARAMQVLAARLQALAEEQASADASADRASQIRTVDRSERIRTYNYPENRIADHRINYKSHNLDQVLDGDLDPLFDALAAADKQARLQNT</sequence>
<dbReference type="EMBL" id="CP000511">
    <property type="protein sequence ID" value="ABM15116.1"/>
    <property type="molecule type" value="Genomic_DNA"/>
</dbReference>
<dbReference type="RefSeq" id="WP_011781494.1">
    <property type="nucleotide sequence ID" value="NZ_JACKSD010000061.1"/>
</dbReference>
<dbReference type="SMR" id="A1TD66"/>
<dbReference type="STRING" id="350058.Mvan_4339"/>
<dbReference type="KEGG" id="mva:Mvan_4339"/>
<dbReference type="eggNOG" id="COG0216">
    <property type="taxonomic scope" value="Bacteria"/>
</dbReference>
<dbReference type="HOGENOM" id="CLU_036856_0_1_11"/>
<dbReference type="Proteomes" id="UP000009159">
    <property type="component" value="Chromosome"/>
</dbReference>
<dbReference type="GO" id="GO:0005737">
    <property type="term" value="C:cytoplasm"/>
    <property type="evidence" value="ECO:0007669"/>
    <property type="project" value="UniProtKB-SubCell"/>
</dbReference>
<dbReference type="GO" id="GO:0016149">
    <property type="term" value="F:translation release factor activity, codon specific"/>
    <property type="evidence" value="ECO:0007669"/>
    <property type="project" value="UniProtKB-UniRule"/>
</dbReference>
<dbReference type="FunFam" id="3.30.160.20:FF:000004">
    <property type="entry name" value="Peptide chain release factor 1"/>
    <property type="match status" value="1"/>
</dbReference>
<dbReference type="Gene3D" id="3.30.160.20">
    <property type="match status" value="1"/>
</dbReference>
<dbReference type="Gene3D" id="3.30.70.1660">
    <property type="match status" value="1"/>
</dbReference>
<dbReference type="Gene3D" id="6.10.140.1950">
    <property type="match status" value="1"/>
</dbReference>
<dbReference type="HAMAP" id="MF_00093">
    <property type="entry name" value="Rel_fac_1"/>
    <property type="match status" value="1"/>
</dbReference>
<dbReference type="InterPro" id="IPR005139">
    <property type="entry name" value="PCRF"/>
</dbReference>
<dbReference type="InterPro" id="IPR000352">
    <property type="entry name" value="Pep_chain_release_fac_I"/>
</dbReference>
<dbReference type="InterPro" id="IPR045853">
    <property type="entry name" value="Pep_chain_release_fac_I_sf"/>
</dbReference>
<dbReference type="InterPro" id="IPR050057">
    <property type="entry name" value="Prokaryotic/Mito_RF"/>
</dbReference>
<dbReference type="InterPro" id="IPR004373">
    <property type="entry name" value="RF-1"/>
</dbReference>
<dbReference type="NCBIfam" id="TIGR00019">
    <property type="entry name" value="prfA"/>
    <property type="match status" value="1"/>
</dbReference>
<dbReference type="NCBIfam" id="NF001859">
    <property type="entry name" value="PRK00591.1"/>
    <property type="match status" value="1"/>
</dbReference>
<dbReference type="PANTHER" id="PTHR43804">
    <property type="entry name" value="LD18447P"/>
    <property type="match status" value="1"/>
</dbReference>
<dbReference type="PANTHER" id="PTHR43804:SF7">
    <property type="entry name" value="LD18447P"/>
    <property type="match status" value="1"/>
</dbReference>
<dbReference type="Pfam" id="PF03462">
    <property type="entry name" value="PCRF"/>
    <property type="match status" value="1"/>
</dbReference>
<dbReference type="Pfam" id="PF00472">
    <property type="entry name" value="RF-1"/>
    <property type="match status" value="1"/>
</dbReference>
<dbReference type="SMART" id="SM00937">
    <property type="entry name" value="PCRF"/>
    <property type="match status" value="1"/>
</dbReference>
<dbReference type="SUPFAM" id="SSF75620">
    <property type="entry name" value="Release factor"/>
    <property type="match status" value="1"/>
</dbReference>
<dbReference type="PROSITE" id="PS00745">
    <property type="entry name" value="RF_PROK_I"/>
    <property type="match status" value="1"/>
</dbReference>
<organism>
    <name type="scientific">Mycolicibacterium vanbaalenii (strain DSM 7251 / JCM 13017 / BCRC 16820 / KCTC 9966 / NRRL B-24157 / PYR-1)</name>
    <name type="common">Mycobacterium vanbaalenii</name>
    <dbReference type="NCBI Taxonomy" id="350058"/>
    <lineage>
        <taxon>Bacteria</taxon>
        <taxon>Bacillati</taxon>
        <taxon>Actinomycetota</taxon>
        <taxon>Actinomycetes</taxon>
        <taxon>Mycobacteriales</taxon>
        <taxon>Mycobacteriaceae</taxon>
        <taxon>Mycolicibacterium</taxon>
    </lineage>
</organism>
<reference key="1">
    <citation type="submission" date="2006-12" db="EMBL/GenBank/DDBJ databases">
        <title>Complete sequence of Mycobacterium vanbaalenii PYR-1.</title>
        <authorList>
            <consortium name="US DOE Joint Genome Institute"/>
            <person name="Copeland A."/>
            <person name="Lucas S."/>
            <person name="Lapidus A."/>
            <person name="Barry K."/>
            <person name="Detter J.C."/>
            <person name="Glavina del Rio T."/>
            <person name="Hammon N."/>
            <person name="Israni S."/>
            <person name="Dalin E."/>
            <person name="Tice H."/>
            <person name="Pitluck S."/>
            <person name="Singan V."/>
            <person name="Schmutz J."/>
            <person name="Larimer F."/>
            <person name="Land M."/>
            <person name="Hauser L."/>
            <person name="Kyrpides N."/>
            <person name="Anderson I.J."/>
            <person name="Miller C."/>
            <person name="Richardson P."/>
        </authorList>
    </citation>
    <scope>NUCLEOTIDE SEQUENCE [LARGE SCALE GENOMIC DNA]</scope>
    <source>
        <strain>DSM 7251 / JCM 13017 / BCRC 16820 / KCTC 9966 / NRRL B-24157 / PYR-1</strain>
    </source>
</reference>
<name>RF1_MYCVP</name>